<feature type="chain" id="PRO_1000190985" description="Ketol-acid reductoisomerase (NADP(+))">
    <location>
        <begin position="1"/>
        <end position="491"/>
    </location>
</feature>
<feature type="domain" description="KARI N-terminal Rossmann" evidence="2">
    <location>
        <begin position="15"/>
        <end position="208"/>
    </location>
</feature>
<feature type="domain" description="KARI C-terminal knotted 1" evidence="3">
    <location>
        <begin position="209"/>
        <end position="344"/>
    </location>
</feature>
<feature type="domain" description="KARI C-terminal knotted 2" evidence="3">
    <location>
        <begin position="345"/>
        <end position="484"/>
    </location>
</feature>
<feature type="active site" evidence="1">
    <location>
        <position position="132"/>
    </location>
</feature>
<feature type="binding site" evidence="1">
    <location>
        <begin position="45"/>
        <end position="48"/>
    </location>
    <ligand>
        <name>NADP(+)</name>
        <dbReference type="ChEBI" id="CHEBI:58349"/>
    </ligand>
</feature>
<feature type="binding site" evidence="1">
    <location>
        <position position="68"/>
    </location>
    <ligand>
        <name>NADP(+)</name>
        <dbReference type="ChEBI" id="CHEBI:58349"/>
    </ligand>
</feature>
<feature type="binding site" evidence="1">
    <location>
        <position position="76"/>
    </location>
    <ligand>
        <name>NADP(+)</name>
        <dbReference type="ChEBI" id="CHEBI:58349"/>
    </ligand>
</feature>
<feature type="binding site" evidence="1">
    <location>
        <position position="78"/>
    </location>
    <ligand>
        <name>NADP(+)</name>
        <dbReference type="ChEBI" id="CHEBI:58349"/>
    </ligand>
</feature>
<feature type="binding site" evidence="1">
    <location>
        <begin position="108"/>
        <end position="110"/>
    </location>
    <ligand>
        <name>NADP(+)</name>
        <dbReference type="ChEBI" id="CHEBI:58349"/>
    </ligand>
</feature>
<feature type="binding site" evidence="1">
    <location>
        <position position="158"/>
    </location>
    <ligand>
        <name>NADP(+)</name>
        <dbReference type="ChEBI" id="CHEBI:58349"/>
    </ligand>
</feature>
<feature type="binding site" evidence="1">
    <location>
        <position position="217"/>
    </location>
    <ligand>
        <name>Mg(2+)</name>
        <dbReference type="ChEBI" id="CHEBI:18420"/>
        <label>1</label>
    </ligand>
</feature>
<feature type="binding site" evidence="1">
    <location>
        <position position="217"/>
    </location>
    <ligand>
        <name>Mg(2+)</name>
        <dbReference type="ChEBI" id="CHEBI:18420"/>
        <label>2</label>
    </ligand>
</feature>
<feature type="binding site" evidence="1">
    <location>
        <position position="221"/>
    </location>
    <ligand>
        <name>Mg(2+)</name>
        <dbReference type="ChEBI" id="CHEBI:18420"/>
        <label>1</label>
    </ligand>
</feature>
<feature type="binding site" evidence="1">
    <location>
        <position position="389"/>
    </location>
    <ligand>
        <name>Mg(2+)</name>
        <dbReference type="ChEBI" id="CHEBI:18420"/>
        <label>2</label>
    </ligand>
</feature>
<feature type="binding site" evidence="1">
    <location>
        <position position="393"/>
    </location>
    <ligand>
        <name>Mg(2+)</name>
        <dbReference type="ChEBI" id="CHEBI:18420"/>
        <label>2</label>
    </ligand>
</feature>
<feature type="binding site" evidence="1">
    <location>
        <position position="414"/>
    </location>
    <ligand>
        <name>substrate</name>
    </ligand>
</feature>
<organism>
    <name type="scientific">Salmonella dublin (strain CT_02021853)</name>
    <dbReference type="NCBI Taxonomy" id="439851"/>
    <lineage>
        <taxon>Bacteria</taxon>
        <taxon>Pseudomonadati</taxon>
        <taxon>Pseudomonadota</taxon>
        <taxon>Gammaproteobacteria</taxon>
        <taxon>Enterobacterales</taxon>
        <taxon>Enterobacteriaceae</taxon>
        <taxon>Salmonella</taxon>
    </lineage>
</organism>
<sequence>MANYFNTLNLRQQLAQLGKCRFMGRDEFADGASYLQGKKVVIVGCGAQGLNQGLNMRDSGLDISYALRKEAIAEKRASWRKATENGFKVGTYEELIPQADLVVNLTPDKQHSDVVRSVQPLMKDGAALGYSHGFNIVEVGEQIRKDITVVMVAPKCPGTEVREEYKRGFGVPTLIAVHPENDPKGEGMAIAKAWAAATGGHRAGVLESSFVAEVKSDLMGEQTILCGMLQAGSLLCFDKLVAEGTDPAYAEKLIQFGWENITEALKQGGITLMMDRLSNPAKLRAYALSEQLKEIMAPLFQKHMDDIISGEFSSGMMADWANDDKKLLTWREETGKTAFETAPQFEGKIGEQEYFDKGVLMIAMVKAGVELAFETMVDSGIIEESAYYESLHELPLIANTIARKRLYEMNVVISDTAEYGNYLFSYACVPLLKPFMAELQPGDLGSAIPEGAVDNAQLRDVNDAIRSHAIEQVGKKLRGYMTDMKRIAVAG</sequence>
<accession>B5FN70</accession>
<dbReference type="EC" id="1.1.1.86" evidence="1"/>
<dbReference type="EMBL" id="CP001144">
    <property type="protein sequence ID" value="ACH73614.1"/>
    <property type="molecule type" value="Genomic_DNA"/>
</dbReference>
<dbReference type="RefSeq" id="WP_000024940.1">
    <property type="nucleotide sequence ID" value="NC_011205.1"/>
</dbReference>
<dbReference type="SMR" id="B5FN70"/>
<dbReference type="KEGG" id="sed:SeD_A4299"/>
<dbReference type="HOGENOM" id="CLU_551905_0_0_6"/>
<dbReference type="UniPathway" id="UPA00047">
    <property type="reaction ID" value="UER00056"/>
</dbReference>
<dbReference type="UniPathway" id="UPA00049">
    <property type="reaction ID" value="UER00060"/>
</dbReference>
<dbReference type="Proteomes" id="UP000008322">
    <property type="component" value="Chromosome"/>
</dbReference>
<dbReference type="GO" id="GO:0005829">
    <property type="term" value="C:cytosol"/>
    <property type="evidence" value="ECO:0007669"/>
    <property type="project" value="TreeGrafter"/>
</dbReference>
<dbReference type="GO" id="GO:0004455">
    <property type="term" value="F:ketol-acid reductoisomerase activity"/>
    <property type="evidence" value="ECO:0007669"/>
    <property type="project" value="UniProtKB-UniRule"/>
</dbReference>
<dbReference type="GO" id="GO:0000287">
    <property type="term" value="F:magnesium ion binding"/>
    <property type="evidence" value="ECO:0007669"/>
    <property type="project" value="UniProtKB-UniRule"/>
</dbReference>
<dbReference type="GO" id="GO:0009097">
    <property type="term" value="P:isoleucine biosynthetic process"/>
    <property type="evidence" value="ECO:0007669"/>
    <property type="project" value="UniProtKB-UniRule"/>
</dbReference>
<dbReference type="GO" id="GO:0009099">
    <property type="term" value="P:L-valine biosynthetic process"/>
    <property type="evidence" value="ECO:0007669"/>
    <property type="project" value="UniProtKB-UniRule"/>
</dbReference>
<dbReference type="FunFam" id="1.10.1040.10:FF:000007">
    <property type="entry name" value="Ketol-acid reductoisomerase (NADP(+))"/>
    <property type="match status" value="1"/>
</dbReference>
<dbReference type="FunFam" id="3.40.50.720:FF:000043">
    <property type="entry name" value="Ketol-acid reductoisomerase (NADP(+))"/>
    <property type="match status" value="1"/>
</dbReference>
<dbReference type="Gene3D" id="1.10.1040.10">
    <property type="entry name" value="N-(1-d-carboxylethyl)-l-norvaline Dehydrogenase, domain 2"/>
    <property type="match status" value="1"/>
</dbReference>
<dbReference type="Gene3D" id="3.40.50.720">
    <property type="entry name" value="NAD(P)-binding Rossmann-like Domain"/>
    <property type="match status" value="1"/>
</dbReference>
<dbReference type="HAMAP" id="MF_00435">
    <property type="entry name" value="IlvC"/>
    <property type="match status" value="1"/>
</dbReference>
<dbReference type="InterPro" id="IPR008927">
    <property type="entry name" value="6-PGluconate_DH-like_C_sf"/>
</dbReference>
<dbReference type="InterPro" id="IPR013328">
    <property type="entry name" value="6PGD_dom2"/>
</dbReference>
<dbReference type="InterPro" id="IPR013023">
    <property type="entry name" value="KARI"/>
</dbReference>
<dbReference type="InterPro" id="IPR000506">
    <property type="entry name" value="KARI_C"/>
</dbReference>
<dbReference type="InterPro" id="IPR013116">
    <property type="entry name" value="KARI_N"/>
</dbReference>
<dbReference type="InterPro" id="IPR036291">
    <property type="entry name" value="NAD(P)-bd_dom_sf"/>
</dbReference>
<dbReference type="NCBIfam" id="TIGR00465">
    <property type="entry name" value="ilvC"/>
    <property type="match status" value="1"/>
</dbReference>
<dbReference type="NCBIfam" id="NF003557">
    <property type="entry name" value="PRK05225.1"/>
    <property type="match status" value="1"/>
</dbReference>
<dbReference type="PANTHER" id="PTHR21371">
    <property type="entry name" value="KETOL-ACID REDUCTOISOMERASE, MITOCHONDRIAL"/>
    <property type="match status" value="1"/>
</dbReference>
<dbReference type="PANTHER" id="PTHR21371:SF1">
    <property type="entry name" value="KETOL-ACID REDUCTOISOMERASE, MITOCHONDRIAL"/>
    <property type="match status" value="1"/>
</dbReference>
<dbReference type="Pfam" id="PF01450">
    <property type="entry name" value="KARI_C"/>
    <property type="match status" value="2"/>
</dbReference>
<dbReference type="Pfam" id="PF07991">
    <property type="entry name" value="KARI_N"/>
    <property type="match status" value="1"/>
</dbReference>
<dbReference type="SUPFAM" id="SSF48179">
    <property type="entry name" value="6-phosphogluconate dehydrogenase C-terminal domain-like"/>
    <property type="match status" value="2"/>
</dbReference>
<dbReference type="SUPFAM" id="SSF51735">
    <property type="entry name" value="NAD(P)-binding Rossmann-fold domains"/>
    <property type="match status" value="1"/>
</dbReference>
<dbReference type="PROSITE" id="PS51851">
    <property type="entry name" value="KARI_C"/>
    <property type="match status" value="2"/>
</dbReference>
<dbReference type="PROSITE" id="PS51850">
    <property type="entry name" value="KARI_N"/>
    <property type="match status" value="1"/>
</dbReference>
<keyword id="KW-0028">Amino-acid biosynthesis</keyword>
<keyword id="KW-0100">Branched-chain amino acid biosynthesis</keyword>
<keyword id="KW-0460">Magnesium</keyword>
<keyword id="KW-0479">Metal-binding</keyword>
<keyword id="KW-0521">NADP</keyword>
<keyword id="KW-0560">Oxidoreductase</keyword>
<keyword id="KW-0677">Repeat</keyword>
<protein>
    <recommendedName>
        <fullName evidence="1">Ketol-acid reductoisomerase (NADP(+))</fullName>
        <shortName evidence="1">KARI</shortName>
        <ecNumber evidence="1">1.1.1.86</ecNumber>
    </recommendedName>
    <alternativeName>
        <fullName evidence="1">Acetohydroxy-acid isomeroreductase</fullName>
        <shortName evidence="1">AHIR</shortName>
    </alternativeName>
    <alternativeName>
        <fullName evidence="1">Alpha-keto-beta-hydroxylacyl reductoisomerase</fullName>
    </alternativeName>
    <alternativeName>
        <fullName evidence="1">Ketol-acid reductoisomerase type 2</fullName>
    </alternativeName>
    <alternativeName>
        <fullName evidence="1">Ketol-acid reductoisomerase type II</fullName>
    </alternativeName>
</protein>
<name>ILVC_SALDC</name>
<reference key="1">
    <citation type="journal article" date="2011" name="J. Bacteriol.">
        <title>Comparative genomics of 28 Salmonella enterica isolates: evidence for CRISPR-mediated adaptive sublineage evolution.</title>
        <authorList>
            <person name="Fricke W.F."/>
            <person name="Mammel M.K."/>
            <person name="McDermott P.F."/>
            <person name="Tartera C."/>
            <person name="White D.G."/>
            <person name="Leclerc J.E."/>
            <person name="Ravel J."/>
            <person name="Cebula T.A."/>
        </authorList>
    </citation>
    <scope>NUCLEOTIDE SEQUENCE [LARGE SCALE GENOMIC DNA]</scope>
    <source>
        <strain>CT_02021853</strain>
    </source>
</reference>
<evidence type="ECO:0000255" key="1">
    <source>
        <dbReference type="HAMAP-Rule" id="MF_00435"/>
    </source>
</evidence>
<evidence type="ECO:0000255" key="2">
    <source>
        <dbReference type="PROSITE-ProRule" id="PRU01197"/>
    </source>
</evidence>
<evidence type="ECO:0000255" key="3">
    <source>
        <dbReference type="PROSITE-ProRule" id="PRU01198"/>
    </source>
</evidence>
<comment type="function">
    <text evidence="1">Involved in the biosynthesis of branched-chain amino acids (BCAA). Catalyzes an alkyl-migration followed by a ketol-acid reduction of (S)-2-acetolactate (S2AL) to yield (R)-2,3-dihydroxy-isovalerate. In the isomerase reaction, S2AL is rearranged via a Mg-dependent methyl migration to produce 3-hydroxy-3-methyl-2-ketobutyrate (HMKB). In the reductase reaction, this 2-ketoacid undergoes a metal-dependent reduction by NADPH to yield (R)-2,3-dihydroxy-isovalerate.</text>
</comment>
<comment type="catalytic activity">
    <reaction evidence="1">
        <text>(2R)-2,3-dihydroxy-3-methylbutanoate + NADP(+) = (2S)-2-acetolactate + NADPH + H(+)</text>
        <dbReference type="Rhea" id="RHEA:22068"/>
        <dbReference type="ChEBI" id="CHEBI:15378"/>
        <dbReference type="ChEBI" id="CHEBI:49072"/>
        <dbReference type="ChEBI" id="CHEBI:57783"/>
        <dbReference type="ChEBI" id="CHEBI:58349"/>
        <dbReference type="ChEBI" id="CHEBI:58476"/>
        <dbReference type="EC" id="1.1.1.86"/>
    </reaction>
</comment>
<comment type="catalytic activity">
    <reaction evidence="1">
        <text>(2R,3R)-2,3-dihydroxy-3-methylpentanoate + NADP(+) = (S)-2-ethyl-2-hydroxy-3-oxobutanoate + NADPH + H(+)</text>
        <dbReference type="Rhea" id="RHEA:13493"/>
        <dbReference type="ChEBI" id="CHEBI:15378"/>
        <dbReference type="ChEBI" id="CHEBI:49256"/>
        <dbReference type="ChEBI" id="CHEBI:49258"/>
        <dbReference type="ChEBI" id="CHEBI:57783"/>
        <dbReference type="ChEBI" id="CHEBI:58349"/>
        <dbReference type="EC" id="1.1.1.86"/>
    </reaction>
</comment>
<comment type="cofactor">
    <cofactor evidence="1">
        <name>Mg(2+)</name>
        <dbReference type="ChEBI" id="CHEBI:18420"/>
    </cofactor>
    <text evidence="1">Binds 2 magnesium ions per subunit.</text>
</comment>
<comment type="pathway">
    <text evidence="1">Amino-acid biosynthesis; L-isoleucine biosynthesis; L-isoleucine from 2-oxobutanoate: step 2/4.</text>
</comment>
<comment type="pathway">
    <text evidence="1">Amino-acid biosynthesis; L-valine biosynthesis; L-valine from pyruvate: step 2/4.</text>
</comment>
<comment type="similarity">
    <text evidence="1">Belongs to the ketol-acid reductoisomerase family.</text>
</comment>
<proteinExistence type="inferred from homology"/>
<gene>
    <name evidence="1" type="primary">ilvC</name>
    <name type="ordered locus">SeD_A4299</name>
</gene>